<evidence type="ECO:0000255" key="1">
    <source>
        <dbReference type="HAMAP-Rule" id="MF_01576"/>
    </source>
</evidence>
<protein>
    <recommendedName>
        <fullName evidence="1">Bifunctional protein FolD</fullName>
    </recommendedName>
    <domain>
        <recommendedName>
            <fullName evidence="1">Methylenetetrahydrofolate dehydrogenase</fullName>
            <ecNumber evidence="1">1.5.1.5</ecNumber>
        </recommendedName>
    </domain>
    <domain>
        <recommendedName>
            <fullName evidence="1">Methenyltetrahydrofolate cyclohydrolase</fullName>
            <ecNumber evidence="1">3.5.4.9</ecNumber>
        </recommendedName>
    </domain>
</protein>
<sequence>MSLKLDGKKLSLEIEERLNDYIFINKKIAKRAPGLAVIRIGEDPASGVYVNNKEKACSRVGIKSFIFHLKDNVEQKEVEQLINKLNFDKNIDGMLLQLPIPKKFDEQRLISYINPSKDVDGLNEINIGKLVKNEPAMRSCTPAGIINLLRSQNITIEGKKIVVIGRSLLVGKPLSLMLLNLNGTVTMTHSKTLDLNKVCKEADILIAAAGKPNLIDSSFVKEGAVIIDVGIHRLKSSDKNKTRLCGDVLLEDVIPKVLAYTPVPGGVGPMTVTMLLVNTIFSWQKQFGLSSTLNDLLP</sequence>
<proteinExistence type="inferred from homology"/>
<feature type="chain" id="PRO_0000268435" description="Bifunctional protein FolD">
    <location>
        <begin position="1"/>
        <end position="298"/>
    </location>
</feature>
<feature type="binding site" evidence="1">
    <location>
        <begin position="165"/>
        <end position="167"/>
    </location>
    <ligand>
        <name>NADP(+)</name>
        <dbReference type="ChEBI" id="CHEBI:58349"/>
    </ligand>
</feature>
<feature type="binding site" evidence="1">
    <location>
        <position position="190"/>
    </location>
    <ligand>
        <name>NADP(+)</name>
        <dbReference type="ChEBI" id="CHEBI:58349"/>
    </ligand>
</feature>
<feature type="binding site" evidence="1">
    <location>
        <position position="231"/>
    </location>
    <ligand>
        <name>NADP(+)</name>
        <dbReference type="ChEBI" id="CHEBI:58349"/>
    </ligand>
</feature>
<keyword id="KW-0028">Amino-acid biosynthesis</keyword>
<keyword id="KW-0368">Histidine biosynthesis</keyword>
<keyword id="KW-0378">Hydrolase</keyword>
<keyword id="KW-0486">Methionine biosynthesis</keyword>
<keyword id="KW-0511">Multifunctional enzyme</keyword>
<keyword id="KW-0521">NADP</keyword>
<keyword id="KW-0554">One-carbon metabolism</keyword>
<keyword id="KW-0560">Oxidoreductase</keyword>
<keyword id="KW-0658">Purine biosynthesis</keyword>
<dbReference type="EC" id="1.5.1.5" evidence="1"/>
<dbReference type="EC" id="3.5.4.9" evidence="1"/>
<dbReference type="EMBL" id="CP000111">
    <property type="protein sequence ID" value="ABB50139.1"/>
    <property type="molecule type" value="Genomic_DNA"/>
</dbReference>
<dbReference type="RefSeq" id="WP_011376630.1">
    <property type="nucleotide sequence ID" value="NC_007577.1"/>
</dbReference>
<dbReference type="SMR" id="Q31AF6"/>
<dbReference type="STRING" id="74546.PMT9312_1080"/>
<dbReference type="KEGG" id="pmi:PMT9312_1080"/>
<dbReference type="eggNOG" id="COG0190">
    <property type="taxonomic scope" value="Bacteria"/>
</dbReference>
<dbReference type="HOGENOM" id="CLU_034045_2_1_3"/>
<dbReference type="OrthoDB" id="9803580at2"/>
<dbReference type="UniPathway" id="UPA00193"/>
<dbReference type="Proteomes" id="UP000002715">
    <property type="component" value="Chromosome"/>
</dbReference>
<dbReference type="GO" id="GO:0005829">
    <property type="term" value="C:cytosol"/>
    <property type="evidence" value="ECO:0007669"/>
    <property type="project" value="TreeGrafter"/>
</dbReference>
<dbReference type="GO" id="GO:0004477">
    <property type="term" value="F:methenyltetrahydrofolate cyclohydrolase activity"/>
    <property type="evidence" value="ECO:0007669"/>
    <property type="project" value="UniProtKB-UniRule"/>
</dbReference>
<dbReference type="GO" id="GO:0004488">
    <property type="term" value="F:methylenetetrahydrofolate dehydrogenase (NADP+) activity"/>
    <property type="evidence" value="ECO:0007669"/>
    <property type="project" value="UniProtKB-UniRule"/>
</dbReference>
<dbReference type="GO" id="GO:0000105">
    <property type="term" value="P:L-histidine biosynthetic process"/>
    <property type="evidence" value="ECO:0007669"/>
    <property type="project" value="UniProtKB-KW"/>
</dbReference>
<dbReference type="GO" id="GO:0009086">
    <property type="term" value="P:methionine biosynthetic process"/>
    <property type="evidence" value="ECO:0007669"/>
    <property type="project" value="UniProtKB-KW"/>
</dbReference>
<dbReference type="GO" id="GO:0006164">
    <property type="term" value="P:purine nucleotide biosynthetic process"/>
    <property type="evidence" value="ECO:0007669"/>
    <property type="project" value="UniProtKB-KW"/>
</dbReference>
<dbReference type="GO" id="GO:0035999">
    <property type="term" value="P:tetrahydrofolate interconversion"/>
    <property type="evidence" value="ECO:0007669"/>
    <property type="project" value="UniProtKB-UniRule"/>
</dbReference>
<dbReference type="CDD" id="cd01080">
    <property type="entry name" value="NAD_bind_m-THF_DH_Cyclohyd"/>
    <property type="match status" value="1"/>
</dbReference>
<dbReference type="FunFam" id="3.40.50.720:FF:000006">
    <property type="entry name" value="Bifunctional protein FolD"/>
    <property type="match status" value="1"/>
</dbReference>
<dbReference type="FunFam" id="3.40.50.10860:FF:000005">
    <property type="entry name" value="C-1-tetrahydrofolate synthase, cytoplasmic, putative"/>
    <property type="match status" value="1"/>
</dbReference>
<dbReference type="Gene3D" id="3.40.50.10860">
    <property type="entry name" value="Leucine Dehydrogenase, chain A, domain 1"/>
    <property type="match status" value="1"/>
</dbReference>
<dbReference type="Gene3D" id="3.40.50.720">
    <property type="entry name" value="NAD(P)-binding Rossmann-like Domain"/>
    <property type="match status" value="1"/>
</dbReference>
<dbReference type="HAMAP" id="MF_01576">
    <property type="entry name" value="THF_DHG_CYH"/>
    <property type="match status" value="1"/>
</dbReference>
<dbReference type="InterPro" id="IPR046346">
    <property type="entry name" value="Aminoacid_DH-like_N_sf"/>
</dbReference>
<dbReference type="InterPro" id="IPR036291">
    <property type="entry name" value="NAD(P)-bd_dom_sf"/>
</dbReference>
<dbReference type="InterPro" id="IPR000672">
    <property type="entry name" value="THF_DH/CycHdrlase"/>
</dbReference>
<dbReference type="InterPro" id="IPR020630">
    <property type="entry name" value="THF_DH/CycHdrlase_cat_dom"/>
</dbReference>
<dbReference type="InterPro" id="IPR020867">
    <property type="entry name" value="THF_DH/CycHdrlase_CS"/>
</dbReference>
<dbReference type="InterPro" id="IPR020631">
    <property type="entry name" value="THF_DH/CycHdrlase_NAD-bd_dom"/>
</dbReference>
<dbReference type="NCBIfam" id="NF010783">
    <property type="entry name" value="PRK14186.1"/>
    <property type="match status" value="1"/>
</dbReference>
<dbReference type="PANTHER" id="PTHR48099:SF5">
    <property type="entry name" value="C-1-TETRAHYDROFOLATE SYNTHASE, CYTOPLASMIC"/>
    <property type="match status" value="1"/>
</dbReference>
<dbReference type="PANTHER" id="PTHR48099">
    <property type="entry name" value="C-1-TETRAHYDROFOLATE SYNTHASE, CYTOPLASMIC-RELATED"/>
    <property type="match status" value="1"/>
</dbReference>
<dbReference type="Pfam" id="PF00763">
    <property type="entry name" value="THF_DHG_CYH"/>
    <property type="match status" value="1"/>
</dbReference>
<dbReference type="Pfam" id="PF02882">
    <property type="entry name" value="THF_DHG_CYH_C"/>
    <property type="match status" value="1"/>
</dbReference>
<dbReference type="PRINTS" id="PR00085">
    <property type="entry name" value="THFDHDRGNASE"/>
</dbReference>
<dbReference type="SUPFAM" id="SSF53223">
    <property type="entry name" value="Aminoacid dehydrogenase-like, N-terminal domain"/>
    <property type="match status" value="1"/>
</dbReference>
<dbReference type="SUPFAM" id="SSF51735">
    <property type="entry name" value="NAD(P)-binding Rossmann-fold domains"/>
    <property type="match status" value="1"/>
</dbReference>
<dbReference type="PROSITE" id="PS00767">
    <property type="entry name" value="THF_DHG_CYH_2"/>
    <property type="match status" value="1"/>
</dbReference>
<gene>
    <name evidence="1" type="primary">folD</name>
    <name type="ordered locus">PMT9312_1080</name>
</gene>
<name>FOLD_PROM9</name>
<reference key="1">
    <citation type="journal article" date="2006" name="Science">
        <title>Genomic islands and the ecology and evolution of Prochlorococcus.</title>
        <authorList>
            <person name="Coleman M.L."/>
            <person name="Sullivan M.B."/>
            <person name="Martiny A.C."/>
            <person name="Steglich C."/>
            <person name="Barry K."/>
            <person name="Delong E.F."/>
            <person name="Chisholm S.W."/>
        </authorList>
    </citation>
    <scope>NUCLEOTIDE SEQUENCE [LARGE SCALE GENOMIC DNA]</scope>
    <source>
        <strain>MIT 9312</strain>
    </source>
</reference>
<organism>
    <name type="scientific">Prochlorococcus marinus (strain MIT 9312)</name>
    <dbReference type="NCBI Taxonomy" id="74546"/>
    <lineage>
        <taxon>Bacteria</taxon>
        <taxon>Bacillati</taxon>
        <taxon>Cyanobacteriota</taxon>
        <taxon>Cyanophyceae</taxon>
        <taxon>Synechococcales</taxon>
        <taxon>Prochlorococcaceae</taxon>
        <taxon>Prochlorococcus</taxon>
    </lineage>
</organism>
<comment type="function">
    <text evidence="1">Catalyzes the oxidation of 5,10-methylenetetrahydrofolate to 5,10-methenyltetrahydrofolate and then the hydrolysis of 5,10-methenyltetrahydrofolate to 10-formyltetrahydrofolate.</text>
</comment>
<comment type="catalytic activity">
    <reaction evidence="1">
        <text>(6R)-5,10-methylene-5,6,7,8-tetrahydrofolate + NADP(+) = (6R)-5,10-methenyltetrahydrofolate + NADPH</text>
        <dbReference type="Rhea" id="RHEA:22812"/>
        <dbReference type="ChEBI" id="CHEBI:15636"/>
        <dbReference type="ChEBI" id="CHEBI:57455"/>
        <dbReference type="ChEBI" id="CHEBI:57783"/>
        <dbReference type="ChEBI" id="CHEBI:58349"/>
        <dbReference type="EC" id="1.5.1.5"/>
    </reaction>
</comment>
<comment type="catalytic activity">
    <reaction evidence="1">
        <text>(6R)-5,10-methenyltetrahydrofolate + H2O = (6R)-10-formyltetrahydrofolate + H(+)</text>
        <dbReference type="Rhea" id="RHEA:23700"/>
        <dbReference type="ChEBI" id="CHEBI:15377"/>
        <dbReference type="ChEBI" id="CHEBI:15378"/>
        <dbReference type="ChEBI" id="CHEBI:57455"/>
        <dbReference type="ChEBI" id="CHEBI:195366"/>
        <dbReference type="EC" id="3.5.4.9"/>
    </reaction>
</comment>
<comment type="pathway">
    <text evidence="1">One-carbon metabolism; tetrahydrofolate interconversion.</text>
</comment>
<comment type="subunit">
    <text evidence="1">Homodimer.</text>
</comment>
<comment type="similarity">
    <text evidence="1">Belongs to the tetrahydrofolate dehydrogenase/cyclohydrolase family.</text>
</comment>
<accession>Q31AF6</accession>